<proteinExistence type="inferred from homology"/>
<dbReference type="EC" id="2.5.1.16" evidence="1"/>
<dbReference type="EMBL" id="CP000702">
    <property type="protein sequence ID" value="ABQ46306.1"/>
    <property type="molecule type" value="Genomic_DNA"/>
</dbReference>
<dbReference type="SMR" id="A5IJD3"/>
<dbReference type="STRING" id="390874.Tpet_0277"/>
<dbReference type="KEGG" id="tpt:Tpet_0277"/>
<dbReference type="eggNOG" id="COG0421">
    <property type="taxonomic scope" value="Bacteria"/>
</dbReference>
<dbReference type="HOGENOM" id="CLU_048199_0_0_0"/>
<dbReference type="UniPathway" id="UPA00248">
    <property type="reaction ID" value="UER00314"/>
</dbReference>
<dbReference type="Proteomes" id="UP000006558">
    <property type="component" value="Chromosome"/>
</dbReference>
<dbReference type="GO" id="GO:0005829">
    <property type="term" value="C:cytosol"/>
    <property type="evidence" value="ECO:0007669"/>
    <property type="project" value="TreeGrafter"/>
</dbReference>
<dbReference type="GO" id="GO:0004766">
    <property type="term" value="F:spermidine synthase activity"/>
    <property type="evidence" value="ECO:0007669"/>
    <property type="project" value="UniProtKB-UniRule"/>
</dbReference>
<dbReference type="GO" id="GO:0008295">
    <property type="term" value="P:spermidine biosynthetic process"/>
    <property type="evidence" value="ECO:0007669"/>
    <property type="project" value="UniProtKB-UniRule"/>
</dbReference>
<dbReference type="CDD" id="cd02440">
    <property type="entry name" value="AdoMet_MTases"/>
    <property type="match status" value="1"/>
</dbReference>
<dbReference type="Gene3D" id="2.30.140.10">
    <property type="entry name" value="Spermidine synthase, tetramerisation domain"/>
    <property type="match status" value="1"/>
</dbReference>
<dbReference type="Gene3D" id="3.40.50.150">
    <property type="entry name" value="Vaccinia Virus protein VP39"/>
    <property type="match status" value="1"/>
</dbReference>
<dbReference type="HAMAP" id="MF_00198">
    <property type="entry name" value="Spermidine_synth"/>
    <property type="match status" value="1"/>
</dbReference>
<dbReference type="InterPro" id="IPR030374">
    <property type="entry name" value="PABS"/>
</dbReference>
<dbReference type="InterPro" id="IPR030373">
    <property type="entry name" value="PABS_CS"/>
</dbReference>
<dbReference type="InterPro" id="IPR029063">
    <property type="entry name" value="SAM-dependent_MTases_sf"/>
</dbReference>
<dbReference type="InterPro" id="IPR001045">
    <property type="entry name" value="Spermi_synthase"/>
</dbReference>
<dbReference type="InterPro" id="IPR035246">
    <property type="entry name" value="Spermidine_synt_N"/>
</dbReference>
<dbReference type="InterPro" id="IPR037163">
    <property type="entry name" value="Spermidine_synt_N_sf"/>
</dbReference>
<dbReference type="NCBIfam" id="NF037959">
    <property type="entry name" value="MFS_SpdSyn"/>
    <property type="match status" value="1"/>
</dbReference>
<dbReference type="NCBIfam" id="NF002010">
    <property type="entry name" value="PRK00811.1"/>
    <property type="match status" value="1"/>
</dbReference>
<dbReference type="NCBIfam" id="TIGR00417">
    <property type="entry name" value="speE"/>
    <property type="match status" value="1"/>
</dbReference>
<dbReference type="PANTHER" id="PTHR11558:SF11">
    <property type="entry name" value="SPERMIDINE SYNTHASE"/>
    <property type="match status" value="1"/>
</dbReference>
<dbReference type="PANTHER" id="PTHR11558">
    <property type="entry name" value="SPERMIDINE/SPERMINE SYNTHASE"/>
    <property type="match status" value="1"/>
</dbReference>
<dbReference type="Pfam" id="PF17284">
    <property type="entry name" value="Spermine_synt_N"/>
    <property type="match status" value="1"/>
</dbReference>
<dbReference type="Pfam" id="PF01564">
    <property type="entry name" value="Spermine_synth"/>
    <property type="match status" value="1"/>
</dbReference>
<dbReference type="SUPFAM" id="SSF53335">
    <property type="entry name" value="S-adenosyl-L-methionine-dependent methyltransferases"/>
    <property type="match status" value="1"/>
</dbReference>
<dbReference type="PROSITE" id="PS01330">
    <property type="entry name" value="PABS_1"/>
    <property type="match status" value="1"/>
</dbReference>
<dbReference type="PROSITE" id="PS51006">
    <property type="entry name" value="PABS_2"/>
    <property type="match status" value="1"/>
</dbReference>
<accession>A5IJD3</accession>
<sequence>MEKLKEFERDLQPRQHLWYFEYYTGNNVGLFMKINRMIYSGQSDIQRIDIFENPDLGVVFSLDGITMTTEKDEFMYHEMLAHVPMFLHPNPKKVLIIGGGDGGTLREVLKHDSVEKAVLCEVDGLVIEAARKYLKQTSCGFDDPRTEIVIANGAEYVRKFKNEFDVIIIDSTDPTAGQGGHLFTEEFYQACYDALKEDGVFSAETEDPFYDIGWFKLAYKRISKVFPITKVYLGFMTTYPSGMWSYTFASKGIDPIKDFNPEKVKNFNKELKYYNEEVHVASFALPNFVKKELGLM</sequence>
<protein>
    <recommendedName>
        <fullName evidence="1">Polyamine aminopropyltransferase</fullName>
    </recommendedName>
    <alternativeName>
        <fullName evidence="1">Putrescine aminopropyltransferase</fullName>
        <shortName evidence="1">PAPT</shortName>
    </alternativeName>
    <alternativeName>
        <fullName evidence="1">Spermidine synthase</fullName>
        <shortName evidence="1">SPDS</shortName>
        <shortName evidence="1">SPDSY</shortName>
        <ecNumber evidence="1">2.5.1.16</ecNumber>
    </alternativeName>
</protein>
<organism>
    <name type="scientific">Thermotoga petrophila (strain ATCC BAA-488 / DSM 13995 / JCM 10881 / RKU-1)</name>
    <dbReference type="NCBI Taxonomy" id="390874"/>
    <lineage>
        <taxon>Bacteria</taxon>
        <taxon>Thermotogati</taxon>
        <taxon>Thermotogota</taxon>
        <taxon>Thermotogae</taxon>
        <taxon>Thermotogales</taxon>
        <taxon>Thermotogaceae</taxon>
        <taxon>Thermotoga</taxon>
    </lineage>
</organism>
<feature type="chain" id="PRO_1000012026" description="Polyamine aminopropyltransferase">
    <location>
        <begin position="1"/>
        <end position="296"/>
    </location>
</feature>
<feature type="domain" description="PABS" evidence="1">
    <location>
        <begin position="16"/>
        <end position="251"/>
    </location>
</feature>
<feature type="active site" description="Proton acceptor" evidence="1">
    <location>
        <position position="170"/>
    </location>
</feature>
<feature type="binding site" evidence="1">
    <location>
        <position position="46"/>
    </location>
    <ligand>
        <name>S-methyl-5'-thioadenosine</name>
        <dbReference type="ChEBI" id="CHEBI:17509"/>
    </ligand>
</feature>
<feature type="binding site" evidence="1">
    <location>
        <position position="77"/>
    </location>
    <ligand>
        <name>spermidine</name>
        <dbReference type="ChEBI" id="CHEBI:57834"/>
    </ligand>
</feature>
<feature type="binding site" evidence="1">
    <location>
        <position position="101"/>
    </location>
    <ligand>
        <name>spermidine</name>
        <dbReference type="ChEBI" id="CHEBI:57834"/>
    </ligand>
</feature>
<feature type="binding site" evidence="1">
    <location>
        <position position="121"/>
    </location>
    <ligand>
        <name>S-methyl-5'-thioadenosine</name>
        <dbReference type="ChEBI" id="CHEBI:17509"/>
    </ligand>
</feature>
<feature type="binding site" evidence="1">
    <location>
        <begin position="152"/>
        <end position="153"/>
    </location>
    <ligand>
        <name>S-methyl-5'-thioadenosine</name>
        <dbReference type="ChEBI" id="CHEBI:17509"/>
    </ligand>
</feature>
<feature type="binding site" evidence="1">
    <location>
        <begin position="170"/>
        <end position="173"/>
    </location>
    <ligand>
        <name>spermidine</name>
        <dbReference type="ChEBI" id="CHEBI:57834"/>
    </ligand>
</feature>
<evidence type="ECO:0000255" key="1">
    <source>
        <dbReference type="HAMAP-Rule" id="MF_00198"/>
    </source>
</evidence>
<reference key="1">
    <citation type="submission" date="2007-05" db="EMBL/GenBank/DDBJ databases">
        <title>Complete sequence of Thermotoga petrophila RKU-1.</title>
        <authorList>
            <consortium name="US DOE Joint Genome Institute"/>
            <person name="Copeland A."/>
            <person name="Lucas S."/>
            <person name="Lapidus A."/>
            <person name="Barry K."/>
            <person name="Glavina del Rio T."/>
            <person name="Dalin E."/>
            <person name="Tice H."/>
            <person name="Pitluck S."/>
            <person name="Sims D."/>
            <person name="Brettin T."/>
            <person name="Bruce D."/>
            <person name="Detter J.C."/>
            <person name="Han C."/>
            <person name="Tapia R."/>
            <person name="Schmutz J."/>
            <person name="Larimer F."/>
            <person name="Land M."/>
            <person name="Hauser L."/>
            <person name="Kyrpides N."/>
            <person name="Mikhailova N."/>
            <person name="Nelson K."/>
            <person name="Gogarten J.P."/>
            <person name="Noll K."/>
            <person name="Richardson P."/>
        </authorList>
    </citation>
    <scope>NUCLEOTIDE SEQUENCE [LARGE SCALE GENOMIC DNA]</scope>
    <source>
        <strain>ATCC BAA-488 / DSM 13995 / JCM 10881 / RKU-1</strain>
    </source>
</reference>
<gene>
    <name evidence="1" type="primary">speE</name>
    <name type="ordered locus">Tpet_0277</name>
</gene>
<comment type="function">
    <text evidence="1">Catalyzes the irreversible transfer of a propylamine group from the amino donor S-adenosylmethioninamine (decarboxy-AdoMet) to putrescine (1,4-diaminobutane) to yield spermidine.</text>
</comment>
<comment type="catalytic activity">
    <reaction evidence="1">
        <text>S-adenosyl 3-(methylsulfanyl)propylamine + putrescine = S-methyl-5'-thioadenosine + spermidine + H(+)</text>
        <dbReference type="Rhea" id="RHEA:12721"/>
        <dbReference type="ChEBI" id="CHEBI:15378"/>
        <dbReference type="ChEBI" id="CHEBI:17509"/>
        <dbReference type="ChEBI" id="CHEBI:57443"/>
        <dbReference type="ChEBI" id="CHEBI:57834"/>
        <dbReference type="ChEBI" id="CHEBI:326268"/>
        <dbReference type="EC" id="2.5.1.16"/>
    </reaction>
</comment>
<comment type="pathway">
    <text evidence="1">Amine and polyamine biosynthesis; spermidine biosynthesis; spermidine from putrescine: step 1/1.</text>
</comment>
<comment type="subunit">
    <text evidence="1">Homodimer or homotetramer.</text>
</comment>
<comment type="subcellular location">
    <subcellularLocation>
        <location evidence="1">Cytoplasm</location>
    </subcellularLocation>
</comment>
<comment type="similarity">
    <text evidence="1">Belongs to the spermidine/spermine synthase family.</text>
</comment>
<name>SPEE_THEP1</name>
<keyword id="KW-0963">Cytoplasm</keyword>
<keyword id="KW-0620">Polyamine biosynthesis</keyword>
<keyword id="KW-0745">Spermidine biosynthesis</keyword>
<keyword id="KW-0808">Transferase</keyword>